<comment type="function">
    <text>Central component of the condensin complex, a complex required for conversion of interphase chromatin into mitotic-like condense chromosomes. The condensin complex probably introduces positive supercoils into relaxed DNA in the presence of type I topoisomerases and converts nicked DNA into positive knotted forms in the presence of type II topoisomerases. Also involved in chromosome segregation in meiosis.</text>
</comment>
<comment type="subunit">
    <text>Forms a heterodimer with SMC4. Component of the condensin complex, which contains the SMC2 and SMC4 heterodimer, and three non SMC subunits that probably regulate the complex: CAPH, CAPD2 and CAPG.</text>
</comment>
<comment type="subcellular location">
    <subcellularLocation>
        <location>Nucleus</location>
    </subcellularLocation>
    <text evidence="1">Associates with chromatin.</text>
</comment>
<comment type="tissue specificity">
    <text evidence="3">Highly expressed in roots and young floral buds.</text>
</comment>
<comment type="domain">
    <text>The SMC hinge domain, which separates the large intramolecular coiled coil regions, allows the heterodimerization with SMC4, forming a V-shaped heterodimer.</text>
</comment>
<comment type="similarity">
    <text evidence="4">Belongs to the SMC family. SMC2 subfamily.</text>
</comment>
<proteinExistence type="evidence at transcript level"/>
<name>SMC22_ARATH</name>
<protein>
    <recommendedName>
        <fullName>Structural maintenance of chromosomes protein 2-2</fullName>
        <shortName>AtSMC2-2</shortName>
    </recommendedName>
    <alternativeName>
        <fullName>Chromosome-associated protein E-2</fullName>
        <shortName>AtCAP-E2</shortName>
    </alternativeName>
</protein>
<keyword id="KW-0067">ATP-binding</keyword>
<keyword id="KW-0131">Cell cycle</keyword>
<keyword id="KW-0132">Cell division</keyword>
<keyword id="KW-0175">Coiled coil</keyword>
<keyword id="KW-0226">DNA condensation</keyword>
<keyword id="KW-0469">Meiosis</keyword>
<keyword id="KW-0498">Mitosis</keyword>
<keyword id="KW-0547">Nucleotide-binding</keyword>
<keyword id="KW-0539">Nucleus</keyword>
<keyword id="KW-1185">Reference proteome</keyword>
<dbReference type="EMBL" id="AL096860">
    <property type="protein sequence ID" value="CAB51218.1"/>
    <property type="molecule type" value="Genomic_DNA"/>
</dbReference>
<dbReference type="EMBL" id="AL132955">
    <property type="protein sequence ID" value="CAB61972.1"/>
    <property type="molecule type" value="Genomic_DNA"/>
</dbReference>
<dbReference type="EMBL" id="CP002686">
    <property type="protein sequence ID" value="AEE78284.1"/>
    <property type="molecule type" value="Genomic_DNA"/>
</dbReference>
<dbReference type="PIR" id="T45706">
    <property type="entry name" value="T45706"/>
</dbReference>
<dbReference type="SMR" id="Q9SN90"/>
<dbReference type="BioGRID" id="9220">
    <property type="interactions" value="5"/>
</dbReference>
<dbReference type="FunCoup" id="Q9SN90">
    <property type="interactions" value="3540"/>
</dbReference>
<dbReference type="STRING" id="3702.Q9SN90"/>
<dbReference type="iPTMnet" id="Q9SN90"/>
<dbReference type="PaxDb" id="3702-AT3G47460.1"/>
<dbReference type="ProteomicsDB" id="226746"/>
<dbReference type="EnsemblPlants" id="AT3G47460.1">
    <property type="protein sequence ID" value="AT3G47460.1"/>
    <property type="gene ID" value="AT3G47460"/>
</dbReference>
<dbReference type="Gramene" id="AT3G47460.1">
    <property type="protein sequence ID" value="AT3G47460.1"/>
    <property type="gene ID" value="AT3G47460"/>
</dbReference>
<dbReference type="KEGG" id="ath:AT3G47460"/>
<dbReference type="Araport" id="AT3G47460"/>
<dbReference type="TAIR" id="AT3G47460">
    <property type="gene designation" value="ATSMC2"/>
</dbReference>
<dbReference type="eggNOG" id="KOG0933">
    <property type="taxonomic scope" value="Eukaryota"/>
</dbReference>
<dbReference type="HOGENOM" id="CLU_001042_9_0_1"/>
<dbReference type="InParanoid" id="Q9SN90"/>
<dbReference type="OMA" id="ECAGTTI"/>
<dbReference type="PhylomeDB" id="Q9SN90"/>
<dbReference type="PRO" id="PR:Q9SN90"/>
<dbReference type="Proteomes" id="UP000006548">
    <property type="component" value="Chromosome 3"/>
</dbReference>
<dbReference type="ExpressionAtlas" id="Q9SN90">
    <property type="expression patterns" value="baseline and differential"/>
</dbReference>
<dbReference type="GO" id="GO:0005694">
    <property type="term" value="C:chromosome"/>
    <property type="evidence" value="ECO:0007669"/>
    <property type="project" value="InterPro"/>
</dbReference>
<dbReference type="GO" id="GO:0005634">
    <property type="term" value="C:nucleus"/>
    <property type="evidence" value="ECO:0007669"/>
    <property type="project" value="UniProtKB-SubCell"/>
</dbReference>
<dbReference type="GO" id="GO:0005524">
    <property type="term" value="F:ATP binding"/>
    <property type="evidence" value="ECO:0007669"/>
    <property type="project" value="UniProtKB-KW"/>
</dbReference>
<dbReference type="GO" id="GO:0016887">
    <property type="term" value="F:ATP hydrolysis activity"/>
    <property type="evidence" value="ECO:0007669"/>
    <property type="project" value="InterPro"/>
</dbReference>
<dbReference type="GO" id="GO:0051301">
    <property type="term" value="P:cell division"/>
    <property type="evidence" value="ECO:0007669"/>
    <property type="project" value="UniProtKB-KW"/>
</dbReference>
<dbReference type="GO" id="GO:0030261">
    <property type="term" value="P:chromosome condensation"/>
    <property type="evidence" value="ECO:0007669"/>
    <property type="project" value="UniProtKB-KW"/>
</dbReference>
<dbReference type="GO" id="GO:0051321">
    <property type="term" value="P:meiotic cell cycle"/>
    <property type="evidence" value="ECO:0007669"/>
    <property type="project" value="UniProtKB-KW"/>
</dbReference>
<dbReference type="CDD" id="cd03273">
    <property type="entry name" value="ABC_SMC2_euk"/>
    <property type="match status" value="1"/>
</dbReference>
<dbReference type="FunFam" id="1.20.1060.20:FF:000005">
    <property type="entry name" value="Structural maintenance of chromosomes 2"/>
    <property type="match status" value="1"/>
</dbReference>
<dbReference type="FunFam" id="3.40.50.300:FF:000278">
    <property type="entry name" value="Structural maintenance of chromosomes 2"/>
    <property type="match status" value="1"/>
</dbReference>
<dbReference type="FunFam" id="3.40.50.300:FF:000385">
    <property type="entry name" value="Structural maintenance of chromosomes 2"/>
    <property type="match status" value="1"/>
</dbReference>
<dbReference type="Gene3D" id="1.10.287.1490">
    <property type="match status" value="2"/>
</dbReference>
<dbReference type="Gene3D" id="1.20.1060.20">
    <property type="match status" value="1"/>
</dbReference>
<dbReference type="Gene3D" id="3.30.70.1620">
    <property type="match status" value="1"/>
</dbReference>
<dbReference type="Gene3D" id="3.40.50.300">
    <property type="entry name" value="P-loop containing nucleotide triphosphate hydrolases"/>
    <property type="match status" value="2"/>
</dbReference>
<dbReference type="InterPro" id="IPR027417">
    <property type="entry name" value="P-loop_NTPase"/>
</dbReference>
<dbReference type="InterPro" id="IPR003395">
    <property type="entry name" value="RecF/RecN/SMC_N"/>
</dbReference>
<dbReference type="InterPro" id="IPR024704">
    <property type="entry name" value="SMC"/>
</dbReference>
<dbReference type="InterPro" id="IPR027120">
    <property type="entry name" value="Smc2_ABC"/>
</dbReference>
<dbReference type="InterPro" id="IPR010935">
    <property type="entry name" value="SMC_hinge"/>
</dbReference>
<dbReference type="InterPro" id="IPR036277">
    <property type="entry name" value="SMC_hinge_sf"/>
</dbReference>
<dbReference type="PANTHER" id="PTHR43977">
    <property type="entry name" value="STRUCTURAL MAINTENANCE OF CHROMOSOMES PROTEIN 3"/>
    <property type="match status" value="1"/>
</dbReference>
<dbReference type="Pfam" id="PF06470">
    <property type="entry name" value="SMC_hinge"/>
    <property type="match status" value="1"/>
</dbReference>
<dbReference type="Pfam" id="PF02463">
    <property type="entry name" value="SMC_N"/>
    <property type="match status" value="1"/>
</dbReference>
<dbReference type="PIRSF" id="PIRSF005719">
    <property type="entry name" value="SMC"/>
    <property type="match status" value="1"/>
</dbReference>
<dbReference type="SMART" id="SM00968">
    <property type="entry name" value="SMC_hinge"/>
    <property type="match status" value="1"/>
</dbReference>
<dbReference type="SUPFAM" id="SSF52540">
    <property type="entry name" value="P-loop containing nucleoside triphosphate hydrolases"/>
    <property type="match status" value="1"/>
</dbReference>
<dbReference type="SUPFAM" id="SSF75553">
    <property type="entry name" value="Smc hinge domain"/>
    <property type="match status" value="1"/>
</dbReference>
<dbReference type="SUPFAM" id="SSF57997">
    <property type="entry name" value="Tropomyosin"/>
    <property type="match status" value="1"/>
</dbReference>
<organism>
    <name type="scientific">Arabidopsis thaliana</name>
    <name type="common">Mouse-ear cress</name>
    <dbReference type="NCBI Taxonomy" id="3702"/>
    <lineage>
        <taxon>Eukaryota</taxon>
        <taxon>Viridiplantae</taxon>
        <taxon>Streptophyta</taxon>
        <taxon>Embryophyta</taxon>
        <taxon>Tracheophyta</taxon>
        <taxon>Spermatophyta</taxon>
        <taxon>Magnoliopsida</taxon>
        <taxon>eudicotyledons</taxon>
        <taxon>Gunneridae</taxon>
        <taxon>Pentapetalae</taxon>
        <taxon>rosids</taxon>
        <taxon>malvids</taxon>
        <taxon>Brassicales</taxon>
        <taxon>Brassicaceae</taxon>
        <taxon>Camelineae</taxon>
        <taxon>Arabidopsis</taxon>
    </lineage>
</organism>
<evidence type="ECO:0000250" key="1"/>
<evidence type="ECO:0000255" key="2"/>
<evidence type="ECO:0000269" key="3">
    <source>
    </source>
</evidence>
<evidence type="ECO:0000305" key="4"/>
<accession>Q9SN90</accession>
<accession>Q9STX7</accession>
<feature type="chain" id="PRO_0000284895" description="Structural maintenance of chromosomes protein 2-2">
    <location>
        <begin position="1"/>
        <end position="1171"/>
    </location>
</feature>
<feature type="domain" description="Zinc-hook">
    <location>
        <begin position="2"/>
        <end position="1158"/>
    </location>
</feature>
<feature type="domain" description="SMC hinge">
    <location>
        <begin position="518"/>
        <end position="635"/>
    </location>
</feature>
<feature type="coiled-coil region" evidence="2">
    <location>
        <begin position="172"/>
        <end position="510"/>
    </location>
</feature>
<feature type="coiled-coil region" evidence="2">
    <location>
        <begin position="674"/>
        <end position="1026"/>
    </location>
</feature>
<feature type="binding site" evidence="2">
    <location>
        <begin position="32"/>
        <end position="39"/>
    </location>
    <ligand>
        <name>ATP</name>
        <dbReference type="ChEBI" id="CHEBI:30616"/>
    </ligand>
</feature>
<reference key="1">
    <citation type="journal article" date="2000" name="Nature">
        <title>Sequence and analysis of chromosome 3 of the plant Arabidopsis thaliana.</title>
        <authorList>
            <person name="Salanoubat M."/>
            <person name="Lemcke K."/>
            <person name="Rieger M."/>
            <person name="Ansorge W."/>
            <person name="Unseld M."/>
            <person name="Fartmann B."/>
            <person name="Valle G."/>
            <person name="Bloecker H."/>
            <person name="Perez-Alonso M."/>
            <person name="Obermaier B."/>
            <person name="Delseny M."/>
            <person name="Boutry M."/>
            <person name="Grivell L.A."/>
            <person name="Mache R."/>
            <person name="Puigdomenech P."/>
            <person name="De Simone V."/>
            <person name="Choisne N."/>
            <person name="Artiguenave F."/>
            <person name="Robert C."/>
            <person name="Brottier P."/>
            <person name="Wincker P."/>
            <person name="Cattolico L."/>
            <person name="Weissenbach J."/>
            <person name="Saurin W."/>
            <person name="Quetier F."/>
            <person name="Schaefer M."/>
            <person name="Mueller-Auer S."/>
            <person name="Gabel C."/>
            <person name="Fuchs M."/>
            <person name="Benes V."/>
            <person name="Wurmbach E."/>
            <person name="Drzonek H."/>
            <person name="Erfle H."/>
            <person name="Jordan N."/>
            <person name="Bangert S."/>
            <person name="Wiedelmann R."/>
            <person name="Kranz H."/>
            <person name="Voss H."/>
            <person name="Holland R."/>
            <person name="Brandt P."/>
            <person name="Nyakatura G."/>
            <person name="Vezzi A."/>
            <person name="D'Angelo M."/>
            <person name="Pallavicini A."/>
            <person name="Toppo S."/>
            <person name="Simionati B."/>
            <person name="Conrad A."/>
            <person name="Hornischer K."/>
            <person name="Kauer G."/>
            <person name="Loehnert T.-H."/>
            <person name="Nordsiek G."/>
            <person name="Reichelt J."/>
            <person name="Scharfe M."/>
            <person name="Schoen O."/>
            <person name="Bargues M."/>
            <person name="Terol J."/>
            <person name="Climent J."/>
            <person name="Navarro P."/>
            <person name="Collado C."/>
            <person name="Perez-Perez A."/>
            <person name="Ottenwaelder B."/>
            <person name="Duchemin D."/>
            <person name="Cooke R."/>
            <person name="Laudie M."/>
            <person name="Berger-Llauro C."/>
            <person name="Purnelle B."/>
            <person name="Masuy D."/>
            <person name="de Haan M."/>
            <person name="Maarse A.C."/>
            <person name="Alcaraz J.-P."/>
            <person name="Cottet A."/>
            <person name="Casacuberta E."/>
            <person name="Monfort A."/>
            <person name="Argiriou A."/>
            <person name="Flores M."/>
            <person name="Liguori R."/>
            <person name="Vitale D."/>
            <person name="Mannhaupt G."/>
            <person name="Haase D."/>
            <person name="Schoof H."/>
            <person name="Rudd S."/>
            <person name="Zaccaria P."/>
            <person name="Mewes H.-W."/>
            <person name="Mayer K.F.X."/>
            <person name="Kaul S."/>
            <person name="Town C.D."/>
            <person name="Koo H.L."/>
            <person name="Tallon L.J."/>
            <person name="Jenkins J."/>
            <person name="Rooney T."/>
            <person name="Rizzo M."/>
            <person name="Walts A."/>
            <person name="Utterback T."/>
            <person name="Fujii C.Y."/>
            <person name="Shea T.P."/>
            <person name="Creasy T.H."/>
            <person name="Haas B."/>
            <person name="Maiti R."/>
            <person name="Wu D."/>
            <person name="Peterson J."/>
            <person name="Van Aken S."/>
            <person name="Pai G."/>
            <person name="Militscher J."/>
            <person name="Sellers P."/>
            <person name="Gill J.E."/>
            <person name="Feldblyum T.V."/>
            <person name="Preuss D."/>
            <person name="Lin X."/>
            <person name="Nierman W.C."/>
            <person name="Salzberg S.L."/>
            <person name="White O."/>
            <person name="Venter J.C."/>
            <person name="Fraser C.M."/>
            <person name="Kaneko T."/>
            <person name="Nakamura Y."/>
            <person name="Sato S."/>
            <person name="Kato T."/>
            <person name="Asamizu E."/>
            <person name="Sasamoto S."/>
            <person name="Kimura T."/>
            <person name="Idesawa K."/>
            <person name="Kawashima K."/>
            <person name="Kishida Y."/>
            <person name="Kiyokawa C."/>
            <person name="Kohara M."/>
            <person name="Matsumoto M."/>
            <person name="Matsuno A."/>
            <person name="Muraki A."/>
            <person name="Nakayama S."/>
            <person name="Nakazaki N."/>
            <person name="Shinpo S."/>
            <person name="Takeuchi C."/>
            <person name="Wada T."/>
            <person name="Watanabe A."/>
            <person name="Yamada M."/>
            <person name="Yasuda M."/>
            <person name="Tabata S."/>
        </authorList>
    </citation>
    <scope>NUCLEOTIDE SEQUENCE [LARGE SCALE GENOMIC DNA]</scope>
    <source>
        <strain>cv. Columbia</strain>
    </source>
</reference>
<reference key="2">
    <citation type="journal article" date="2017" name="Plant J.">
        <title>Araport11: a complete reannotation of the Arabidopsis thaliana reference genome.</title>
        <authorList>
            <person name="Cheng C.Y."/>
            <person name="Krishnakumar V."/>
            <person name="Chan A.P."/>
            <person name="Thibaud-Nissen F."/>
            <person name="Schobel S."/>
            <person name="Town C.D."/>
        </authorList>
    </citation>
    <scope>GENOME REANNOTATION</scope>
    <source>
        <strain>cv. Columbia</strain>
    </source>
</reference>
<reference key="3">
    <citation type="journal article" date="2003" name="Development">
        <title>Mutations in Arabidopsis condensin genes disrupt embryogenesis, meristem organization and segregation of homologous chromosomes during meiosis.</title>
        <authorList>
            <person name="Siddiqui N.U."/>
            <person name="Stronghill P.E."/>
            <person name="Dengler R.E."/>
            <person name="Hasenkampf C.A."/>
            <person name="Riggs C.D."/>
        </authorList>
    </citation>
    <scope>TISSUE SPECIFICITY</scope>
    <source>
        <strain>cv. Landsberg erecta</strain>
    </source>
</reference>
<sequence>MHIKEICLEGFKSYATRTVVPGFDPHFNAITGLNGSGKSNILDSICFVLGITNLQQVRAANLQELVYKQGQAGITRATVSVTFDNSERNRSPLGHEDHSEITVTRQIVVGGKNKYLINGKLAQPNQVQNLFHSVQLNVNNPHFLIMQGRITKVLNMKPMEILSMLEEAAGTRMYENKKEAALKTLEKKQTKVDEINKLLEKDILPALEKLRREKSQYMQWANGNAELDRLKRFCVAFEYVQAEKIRDNSIHVVEEMKIKMTGIDEQTDKTQGEISELEKQIKALTQAREASMGGEVKALSDKVDSLSNEVTRELSKLTNMEDTLQGEEKNAEKMVHNIEDLKKSVEERASALNKCDEGAAELKQKFQEFSTTLEECEREHQGILAGKSSGDEEKCLEDQLRDAKISVGTAETELKQLNTKISHCEKELKEKKSQLMSKQDEAVAVENELDARKNDVESVKRAFDSLPYKEGQMEALEKDRESELEIGHRLKDKVHELSAQLANVQFTYRDPVKNFDRSKVKGVVAKLIKVNDRSSMTALEVTAGGKLFNVIVDTEDTGKQLLQKGDLRRRVTIIPLNKIQSHLVPPRVQQATVGKGNAELALSLVGYSEELKNAMEYVFGSTFVCKTTDAAKEVAFNREIRTPSVTLEGDVFQPSGLLTGGSRKGGGDLLRQLHDLAEAETKFRAHQKSLSEIEANIKELQPLQTKFTDMKAQLELKMYDMSLFLKRAEQNEHHKLGDAVKKLEEEVEEMRSQIKEKEGLYKSCADTVSTLEKSIKDHDKNREGRLKDLEKNIKTLKARIQASSKDLKGHENVRERLVMEQEAVTQEQSYLKSQLTSLRTQISTLASDVGNQRAKVDAIQKDHDQSLSELKLIHAKMKECDTQISGSIAEQEKCLQKISDMKLDRKKLENEVTRMEMEHKNCSVKVDKLVEKHTWITSEKRLFGNGGTDYDFESRDPHKAREELERLQTDQSSLEKRVNKKVTAMFEKAEDEYNALMTKKNIIETDKSKIKKVIEELDEKKKETLKVTWVKVNQDFGSIFSTLLPGTMSKLEPPEGGTFLDGLEVRVAFGDVWKQSLSELSGGQRSLLALSLILALLLFKPAPIYILDEVDAALDLSHTQNIGRMIKSHFPHSQFIVVSLKEGMFSNADVLFRTKFVDGVSTVQRTVTKQS</sequence>
<gene>
    <name type="primary">SMC2-2</name>
    <name type="synonym">CAP-E2</name>
    <name type="ordered locus">At3g47460</name>
    <name type="ORF">F1P2.10</name>
    <name type="ORF">T21L8.210</name>
</gene>